<keyword id="KW-0687">Ribonucleoprotein</keyword>
<keyword id="KW-0689">Ribosomal protein</keyword>
<dbReference type="EMBL" id="BA000034">
    <property type="protein sequence ID" value="BAC64481.1"/>
    <property type="molecule type" value="Genomic_DNA"/>
</dbReference>
<dbReference type="RefSeq" id="WP_002985307.1">
    <property type="nucleotide sequence ID" value="NC_004606.1"/>
</dbReference>
<dbReference type="SMR" id="P0DE39"/>
<dbReference type="KEGG" id="sps:SPs1386"/>
<dbReference type="HOGENOM" id="CLU_114306_2_1_9"/>
<dbReference type="GO" id="GO:1990904">
    <property type="term" value="C:ribonucleoprotein complex"/>
    <property type="evidence" value="ECO:0007669"/>
    <property type="project" value="UniProtKB-KW"/>
</dbReference>
<dbReference type="GO" id="GO:0005840">
    <property type="term" value="C:ribosome"/>
    <property type="evidence" value="ECO:0007669"/>
    <property type="project" value="UniProtKB-KW"/>
</dbReference>
<dbReference type="GO" id="GO:0003735">
    <property type="term" value="F:structural constituent of ribosome"/>
    <property type="evidence" value="ECO:0007669"/>
    <property type="project" value="InterPro"/>
</dbReference>
<dbReference type="GO" id="GO:0006412">
    <property type="term" value="P:translation"/>
    <property type="evidence" value="ECO:0007669"/>
    <property type="project" value="UniProtKB-UniRule"/>
</dbReference>
<dbReference type="Gene3D" id="4.10.830.30">
    <property type="entry name" value="Ribosomal protein L31"/>
    <property type="match status" value="1"/>
</dbReference>
<dbReference type="HAMAP" id="MF_00502">
    <property type="entry name" value="Ribosomal_bL31_2"/>
    <property type="match status" value="1"/>
</dbReference>
<dbReference type="InterPro" id="IPR034704">
    <property type="entry name" value="Ribosomal_bL28/bL31-like_sf"/>
</dbReference>
<dbReference type="InterPro" id="IPR002150">
    <property type="entry name" value="Ribosomal_bL31"/>
</dbReference>
<dbReference type="InterPro" id="IPR027493">
    <property type="entry name" value="Ribosomal_bL31_B"/>
</dbReference>
<dbReference type="InterPro" id="IPR042105">
    <property type="entry name" value="Ribosomal_bL31_sf"/>
</dbReference>
<dbReference type="NCBIfam" id="TIGR00105">
    <property type="entry name" value="L31"/>
    <property type="match status" value="1"/>
</dbReference>
<dbReference type="NCBIfam" id="NF002462">
    <property type="entry name" value="PRK01678.1"/>
    <property type="match status" value="1"/>
</dbReference>
<dbReference type="PANTHER" id="PTHR33280">
    <property type="entry name" value="50S RIBOSOMAL PROTEIN L31, CHLOROPLASTIC"/>
    <property type="match status" value="1"/>
</dbReference>
<dbReference type="PANTHER" id="PTHR33280:SF1">
    <property type="entry name" value="LARGE RIBOSOMAL SUBUNIT PROTEIN BL31C"/>
    <property type="match status" value="1"/>
</dbReference>
<dbReference type="Pfam" id="PF01197">
    <property type="entry name" value="Ribosomal_L31"/>
    <property type="match status" value="1"/>
</dbReference>
<dbReference type="PRINTS" id="PR01249">
    <property type="entry name" value="RIBOSOMALL31"/>
</dbReference>
<dbReference type="SUPFAM" id="SSF143800">
    <property type="entry name" value="L28p-like"/>
    <property type="match status" value="1"/>
</dbReference>
<dbReference type="PROSITE" id="PS01143">
    <property type="entry name" value="RIBOSOMAL_L31"/>
    <property type="match status" value="1"/>
</dbReference>
<reference key="1">
    <citation type="journal article" date="2003" name="Genome Res.">
        <title>Genome sequence of an M3 strain of Streptococcus pyogenes reveals a large-scale genomic rearrangement in invasive strains and new insights into phage evolution.</title>
        <authorList>
            <person name="Nakagawa I."/>
            <person name="Kurokawa K."/>
            <person name="Yamashita A."/>
            <person name="Nakata M."/>
            <person name="Tomiyasu Y."/>
            <person name="Okahashi N."/>
            <person name="Kawabata S."/>
            <person name="Yamazaki K."/>
            <person name="Shiba T."/>
            <person name="Yasunaga T."/>
            <person name="Hayashi H."/>
            <person name="Hattori M."/>
            <person name="Hamada S."/>
        </authorList>
    </citation>
    <scope>NUCLEOTIDE SEQUENCE [LARGE SCALE GENOMIC DNA]</scope>
    <source>
        <strain>SSI-1</strain>
    </source>
</reference>
<protein>
    <recommendedName>
        <fullName evidence="1">Large ribosomal subunit protein bL31B</fullName>
    </recommendedName>
    <alternativeName>
        <fullName evidence="2">50S ribosomal protein L31 type B</fullName>
    </alternativeName>
</protein>
<evidence type="ECO:0000255" key="1">
    <source>
        <dbReference type="HAMAP-Rule" id="MF_00502"/>
    </source>
</evidence>
<evidence type="ECO:0000305" key="2"/>
<organism>
    <name type="scientific">Streptococcus pyogenes serotype M3 (strain SSI-1)</name>
    <dbReference type="NCBI Taxonomy" id="193567"/>
    <lineage>
        <taxon>Bacteria</taxon>
        <taxon>Bacillati</taxon>
        <taxon>Bacillota</taxon>
        <taxon>Bacilli</taxon>
        <taxon>Lactobacillales</taxon>
        <taxon>Streptococcaceae</taxon>
        <taxon>Streptococcus</taxon>
    </lineage>
</organism>
<name>RL31B_STRPQ</name>
<gene>
    <name evidence="1" type="primary">rpmE2</name>
    <name type="synonym">rl31</name>
    <name type="synonym">rpmE</name>
    <name type="ordered locus">SPs1386</name>
</gene>
<feature type="chain" id="PRO_0000411509" description="Large ribosomal subunit protein bL31B">
    <location>
        <begin position="1"/>
        <end position="86"/>
    </location>
</feature>
<comment type="subunit">
    <text evidence="1">Part of the 50S ribosomal subunit.</text>
</comment>
<comment type="similarity">
    <text evidence="1">Belongs to the bacterial ribosomal protein bL31 family. Type B subfamily.</text>
</comment>
<proteinExistence type="inferred from homology"/>
<accession>P0DE39</accession>
<accession>P66203</accession>
<accession>Q9A0L6</accession>
<sequence length="86" mass="9854">MRKDIHPDYRPVVFLDTTTGYQFLSGSTKASKETVEFEGETYPLIRVEISSDSHPFYTGRQKFTQADGRVDRFNKKYGLKDANAAK</sequence>